<comment type="function">
    <text evidence="1">Transfers the 4'-phosphopantetheine moiety from coenzyme A to a Ser of acyl-carrier-protein.</text>
</comment>
<comment type="catalytic activity">
    <reaction evidence="1">
        <text>apo-[ACP] + CoA = holo-[ACP] + adenosine 3',5'-bisphosphate + H(+)</text>
        <dbReference type="Rhea" id="RHEA:12068"/>
        <dbReference type="Rhea" id="RHEA-COMP:9685"/>
        <dbReference type="Rhea" id="RHEA-COMP:9690"/>
        <dbReference type="ChEBI" id="CHEBI:15378"/>
        <dbReference type="ChEBI" id="CHEBI:29999"/>
        <dbReference type="ChEBI" id="CHEBI:57287"/>
        <dbReference type="ChEBI" id="CHEBI:58343"/>
        <dbReference type="ChEBI" id="CHEBI:64479"/>
        <dbReference type="EC" id="2.7.8.7"/>
    </reaction>
</comment>
<comment type="cofactor">
    <cofactor evidence="1">
        <name>Mg(2+)</name>
        <dbReference type="ChEBI" id="CHEBI:18420"/>
    </cofactor>
</comment>
<comment type="subcellular location">
    <subcellularLocation>
        <location evidence="1">Cytoplasm</location>
    </subcellularLocation>
</comment>
<comment type="similarity">
    <text evidence="1">Belongs to the P-Pant transferase superfamily. AcpS family.</text>
</comment>
<organism>
    <name type="scientific">Chlamydia trachomatis serovar L2b (strain UCH-1/proctitis)</name>
    <dbReference type="NCBI Taxonomy" id="471473"/>
    <lineage>
        <taxon>Bacteria</taxon>
        <taxon>Pseudomonadati</taxon>
        <taxon>Chlamydiota</taxon>
        <taxon>Chlamydiia</taxon>
        <taxon>Chlamydiales</taxon>
        <taxon>Chlamydiaceae</taxon>
        <taxon>Chlamydia/Chlamydophila group</taxon>
        <taxon>Chlamydia</taxon>
    </lineage>
</organism>
<proteinExistence type="inferred from homology"/>
<evidence type="ECO:0000255" key="1">
    <source>
        <dbReference type="HAMAP-Rule" id="MF_00101"/>
    </source>
</evidence>
<accession>B0BB87</accession>
<gene>
    <name evidence="1" type="primary">acpS</name>
    <name type="ordered locus">CTLon_0351</name>
</gene>
<dbReference type="EC" id="2.7.8.7" evidence="1"/>
<dbReference type="EMBL" id="AM884177">
    <property type="protein sequence ID" value="CAP06749.1"/>
    <property type="molecule type" value="Genomic_DNA"/>
</dbReference>
<dbReference type="RefSeq" id="WP_009873555.1">
    <property type="nucleotide sequence ID" value="NC_010280.2"/>
</dbReference>
<dbReference type="SMR" id="B0BB87"/>
<dbReference type="KEGG" id="ctl:CTLon_0351"/>
<dbReference type="HOGENOM" id="CLU_089696_0_2_0"/>
<dbReference type="Proteomes" id="UP001154401">
    <property type="component" value="Chromosome"/>
</dbReference>
<dbReference type="GO" id="GO:0005737">
    <property type="term" value="C:cytoplasm"/>
    <property type="evidence" value="ECO:0007669"/>
    <property type="project" value="UniProtKB-SubCell"/>
</dbReference>
<dbReference type="GO" id="GO:0008897">
    <property type="term" value="F:holo-[acyl-carrier-protein] synthase activity"/>
    <property type="evidence" value="ECO:0007669"/>
    <property type="project" value="UniProtKB-UniRule"/>
</dbReference>
<dbReference type="GO" id="GO:0000287">
    <property type="term" value="F:magnesium ion binding"/>
    <property type="evidence" value="ECO:0007669"/>
    <property type="project" value="UniProtKB-UniRule"/>
</dbReference>
<dbReference type="GO" id="GO:0006633">
    <property type="term" value="P:fatty acid biosynthetic process"/>
    <property type="evidence" value="ECO:0007669"/>
    <property type="project" value="UniProtKB-UniRule"/>
</dbReference>
<dbReference type="Gene3D" id="3.90.470.20">
    <property type="entry name" value="4'-phosphopantetheinyl transferase domain"/>
    <property type="match status" value="1"/>
</dbReference>
<dbReference type="HAMAP" id="MF_00101">
    <property type="entry name" value="AcpS"/>
    <property type="match status" value="1"/>
</dbReference>
<dbReference type="InterPro" id="IPR008278">
    <property type="entry name" value="4-PPantetheinyl_Trfase_dom"/>
</dbReference>
<dbReference type="InterPro" id="IPR037143">
    <property type="entry name" value="4-PPantetheinyl_Trfase_dom_sf"/>
</dbReference>
<dbReference type="InterPro" id="IPR002582">
    <property type="entry name" value="ACPS"/>
</dbReference>
<dbReference type="InterPro" id="IPR004568">
    <property type="entry name" value="Ppantetheine-prot_Trfase_dom"/>
</dbReference>
<dbReference type="NCBIfam" id="TIGR00516">
    <property type="entry name" value="acpS"/>
    <property type="match status" value="1"/>
</dbReference>
<dbReference type="NCBIfam" id="TIGR00556">
    <property type="entry name" value="pantethn_trn"/>
    <property type="match status" value="1"/>
</dbReference>
<dbReference type="Pfam" id="PF01648">
    <property type="entry name" value="ACPS"/>
    <property type="match status" value="1"/>
</dbReference>
<dbReference type="SUPFAM" id="SSF56214">
    <property type="entry name" value="4'-phosphopantetheinyl transferase"/>
    <property type="match status" value="1"/>
</dbReference>
<feature type="chain" id="PRO_1000093868" description="Holo-[acyl-carrier-protein] synthase">
    <location>
        <begin position="1"/>
        <end position="119"/>
    </location>
</feature>
<feature type="binding site" evidence="1">
    <location>
        <position position="7"/>
    </location>
    <ligand>
        <name>Mg(2+)</name>
        <dbReference type="ChEBI" id="CHEBI:18420"/>
    </ligand>
</feature>
<feature type="binding site" evidence="1">
    <location>
        <position position="56"/>
    </location>
    <ligand>
        <name>Mg(2+)</name>
        <dbReference type="ChEBI" id="CHEBI:18420"/>
    </ligand>
</feature>
<protein>
    <recommendedName>
        <fullName evidence="1">Holo-[acyl-carrier-protein] synthase</fullName>
        <shortName evidence="1">Holo-ACP synthase</shortName>
        <ecNumber evidence="1">2.7.8.7</ecNumber>
    </recommendedName>
    <alternativeName>
        <fullName evidence="1">4'-phosphopantetheinyl transferase AcpS</fullName>
    </alternativeName>
</protein>
<name>ACPS_CHLTB</name>
<reference key="1">
    <citation type="journal article" date="2008" name="Genome Res.">
        <title>Chlamydia trachomatis: genome sequence analysis of lymphogranuloma venereum isolates.</title>
        <authorList>
            <person name="Thomson N.R."/>
            <person name="Holden M.T.G."/>
            <person name="Carder C."/>
            <person name="Lennard N."/>
            <person name="Lockey S.J."/>
            <person name="Marsh P."/>
            <person name="Skipp P."/>
            <person name="O'Connor C.D."/>
            <person name="Goodhead I."/>
            <person name="Norbertzcak H."/>
            <person name="Harris B."/>
            <person name="Ormond D."/>
            <person name="Rance R."/>
            <person name="Quail M.A."/>
            <person name="Parkhill J."/>
            <person name="Stephens R.S."/>
            <person name="Clarke I.N."/>
        </authorList>
    </citation>
    <scope>NUCLEOTIDE SEQUENCE [LARGE SCALE GENOMIC DNA]</scope>
    <source>
        <strain>UCH-1/proctitis</strain>
    </source>
</reference>
<keyword id="KW-0963">Cytoplasm</keyword>
<keyword id="KW-0275">Fatty acid biosynthesis</keyword>
<keyword id="KW-0276">Fatty acid metabolism</keyword>
<keyword id="KW-0444">Lipid biosynthesis</keyword>
<keyword id="KW-0443">Lipid metabolism</keyword>
<keyword id="KW-0460">Magnesium</keyword>
<keyword id="KW-0479">Metal-binding</keyword>
<keyword id="KW-0808">Transferase</keyword>
<sequence>MFGVGIDIIEIDRIRKSYQTYGDRFLKKIFTEGERVYCFSKSNPYASLAARFAAKEAVAKALGTGIGKLLKWKEIEMRRDSRQPQVVVPEALLCSLGVKRVLLSVSHSREYATAVAIAE</sequence>